<accession>P42297</accession>
<dbReference type="EMBL" id="D31856">
    <property type="protein sequence ID" value="BAA06654.1"/>
    <property type="molecule type" value="Genomic_DNA"/>
</dbReference>
<dbReference type="EMBL" id="D29985">
    <property type="protein sequence ID" value="BAA06258.1"/>
    <property type="molecule type" value="Genomic_DNA"/>
</dbReference>
<dbReference type="EMBL" id="AL009126">
    <property type="protein sequence ID" value="CAB15961.1"/>
    <property type="molecule type" value="Genomic_DNA"/>
</dbReference>
<dbReference type="PIR" id="A70077">
    <property type="entry name" value="A70077"/>
</dbReference>
<dbReference type="RefSeq" id="NP_391804.1">
    <property type="nucleotide sequence ID" value="NC_000964.3"/>
</dbReference>
<dbReference type="RefSeq" id="WP_003227162.1">
    <property type="nucleotide sequence ID" value="NZ_OZ025638.1"/>
</dbReference>
<dbReference type="SMR" id="P42297"/>
<dbReference type="FunCoup" id="P42297">
    <property type="interactions" value="161"/>
</dbReference>
<dbReference type="STRING" id="224308.BSU39250"/>
<dbReference type="jPOST" id="P42297"/>
<dbReference type="PaxDb" id="224308-BSU39250"/>
<dbReference type="EnsemblBacteria" id="CAB15961">
    <property type="protein sequence ID" value="CAB15961"/>
    <property type="gene ID" value="BSU_39250"/>
</dbReference>
<dbReference type="GeneID" id="937971"/>
<dbReference type="KEGG" id="bsu:BSU39250"/>
<dbReference type="PATRIC" id="fig|224308.179.peg.4249"/>
<dbReference type="eggNOG" id="COG0589">
    <property type="taxonomic scope" value="Bacteria"/>
</dbReference>
<dbReference type="InParanoid" id="P42297"/>
<dbReference type="OrthoDB" id="9777884at2"/>
<dbReference type="PhylomeDB" id="P42297"/>
<dbReference type="BioCyc" id="BSUB:BSU39250-MONOMER"/>
<dbReference type="Proteomes" id="UP000001570">
    <property type="component" value="Chromosome"/>
</dbReference>
<dbReference type="CDD" id="cd00293">
    <property type="entry name" value="USP-like"/>
    <property type="match status" value="1"/>
</dbReference>
<dbReference type="Gene3D" id="3.40.50.620">
    <property type="entry name" value="HUPs"/>
    <property type="match status" value="1"/>
</dbReference>
<dbReference type="InterPro" id="IPR014729">
    <property type="entry name" value="Rossmann-like_a/b/a_fold"/>
</dbReference>
<dbReference type="InterPro" id="IPR006015">
    <property type="entry name" value="Universal_stress_UspA"/>
</dbReference>
<dbReference type="InterPro" id="IPR006016">
    <property type="entry name" value="UspA"/>
</dbReference>
<dbReference type="PANTHER" id="PTHR46268">
    <property type="entry name" value="STRESS RESPONSE PROTEIN NHAX"/>
    <property type="match status" value="1"/>
</dbReference>
<dbReference type="PANTHER" id="PTHR46268:SF6">
    <property type="entry name" value="UNIVERSAL STRESS PROTEIN UP12"/>
    <property type="match status" value="1"/>
</dbReference>
<dbReference type="Pfam" id="PF00582">
    <property type="entry name" value="Usp"/>
    <property type="match status" value="1"/>
</dbReference>
<dbReference type="PIRSF" id="PIRSF006276">
    <property type="entry name" value="UspA"/>
    <property type="match status" value="1"/>
</dbReference>
<dbReference type="PRINTS" id="PR01438">
    <property type="entry name" value="UNVRSLSTRESS"/>
</dbReference>
<dbReference type="SUPFAM" id="SSF52402">
    <property type="entry name" value="Adenine nucleotide alpha hydrolases-like"/>
    <property type="match status" value="1"/>
</dbReference>
<comment type="similarity">
    <text evidence="2">Belongs to the universal stress protein A family.</text>
</comment>
<proteinExistence type="inferred from homology"/>
<evidence type="ECO:0000255" key="1"/>
<evidence type="ECO:0000305" key="2"/>
<name>YXIE_BACSU</name>
<organism>
    <name type="scientific">Bacillus subtilis (strain 168)</name>
    <dbReference type="NCBI Taxonomy" id="224308"/>
    <lineage>
        <taxon>Bacteria</taxon>
        <taxon>Bacillati</taxon>
        <taxon>Bacillota</taxon>
        <taxon>Bacilli</taxon>
        <taxon>Bacillales</taxon>
        <taxon>Bacillaceae</taxon>
        <taxon>Bacillus</taxon>
    </lineage>
</organism>
<reference key="1">
    <citation type="journal article" date="1995" name="Microbiology">
        <title>Cloning and sequencing of a 29 kb region of the Bacillus subtilis genome containing the hut and wapA loci.</title>
        <authorList>
            <person name="Yoshida K."/>
            <person name="Sano H."/>
            <person name="Seki S."/>
            <person name="Oda M."/>
            <person name="Fujimura M."/>
            <person name="Fujita Y."/>
        </authorList>
    </citation>
    <scope>NUCLEOTIDE SEQUENCE [GENOMIC DNA]</scope>
    <source>
        <strain>168 / BGSC1A1</strain>
    </source>
</reference>
<reference key="2">
    <citation type="journal article" date="1997" name="Nature">
        <title>The complete genome sequence of the Gram-positive bacterium Bacillus subtilis.</title>
        <authorList>
            <person name="Kunst F."/>
            <person name="Ogasawara N."/>
            <person name="Moszer I."/>
            <person name="Albertini A.M."/>
            <person name="Alloni G."/>
            <person name="Azevedo V."/>
            <person name="Bertero M.G."/>
            <person name="Bessieres P."/>
            <person name="Bolotin A."/>
            <person name="Borchert S."/>
            <person name="Borriss R."/>
            <person name="Boursier L."/>
            <person name="Brans A."/>
            <person name="Braun M."/>
            <person name="Brignell S.C."/>
            <person name="Bron S."/>
            <person name="Brouillet S."/>
            <person name="Bruschi C.V."/>
            <person name="Caldwell B."/>
            <person name="Capuano V."/>
            <person name="Carter N.M."/>
            <person name="Choi S.-K."/>
            <person name="Codani J.-J."/>
            <person name="Connerton I.F."/>
            <person name="Cummings N.J."/>
            <person name="Daniel R.A."/>
            <person name="Denizot F."/>
            <person name="Devine K.M."/>
            <person name="Duesterhoeft A."/>
            <person name="Ehrlich S.D."/>
            <person name="Emmerson P.T."/>
            <person name="Entian K.-D."/>
            <person name="Errington J."/>
            <person name="Fabret C."/>
            <person name="Ferrari E."/>
            <person name="Foulger D."/>
            <person name="Fritz C."/>
            <person name="Fujita M."/>
            <person name="Fujita Y."/>
            <person name="Fuma S."/>
            <person name="Galizzi A."/>
            <person name="Galleron N."/>
            <person name="Ghim S.-Y."/>
            <person name="Glaser P."/>
            <person name="Goffeau A."/>
            <person name="Golightly E.J."/>
            <person name="Grandi G."/>
            <person name="Guiseppi G."/>
            <person name="Guy B.J."/>
            <person name="Haga K."/>
            <person name="Haiech J."/>
            <person name="Harwood C.R."/>
            <person name="Henaut A."/>
            <person name="Hilbert H."/>
            <person name="Holsappel S."/>
            <person name="Hosono S."/>
            <person name="Hullo M.-F."/>
            <person name="Itaya M."/>
            <person name="Jones L.-M."/>
            <person name="Joris B."/>
            <person name="Karamata D."/>
            <person name="Kasahara Y."/>
            <person name="Klaerr-Blanchard M."/>
            <person name="Klein C."/>
            <person name="Kobayashi Y."/>
            <person name="Koetter P."/>
            <person name="Koningstein G."/>
            <person name="Krogh S."/>
            <person name="Kumano M."/>
            <person name="Kurita K."/>
            <person name="Lapidus A."/>
            <person name="Lardinois S."/>
            <person name="Lauber J."/>
            <person name="Lazarevic V."/>
            <person name="Lee S.-M."/>
            <person name="Levine A."/>
            <person name="Liu H."/>
            <person name="Masuda S."/>
            <person name="Mauel C."/>
            <person name="Medigue C."/>
            <person name="Medina N."/>
            <person name="Mellado R.P."/>
            <person name="Mizuno M."/>
            <person name="Moestl D."/>
            <person name="Nakai S."/>
            <person name="Noback M."/>
            <person name="Noone D."/>
            <person name="O'Reilly M."/>
            <person name="Ogawa K."/>
            <person name="Ogiwara A."/>
            <person name="Oudega B."/>
            <person name="Park S.-H."/>
            <person name="Parro V."/>
            <person name="Pohl T.M."/>
            <person name="Portetelle D."/>
            <person name="Porwollik S."/>
            <person name="Prescott A.M."/>
            <person name="Presecan E."/>
            <person name="Pujic P."/>
            <person name="Purnelle B."/>
            <person name="Rapoport G."/>
            <person name="Rey M."/>
            <person name="Reynolds S."/>
            <person name="Rieger M."/>
            <person name="Rivolta C."/>
            <person name="Rocha E."/>
            <person name="Roche B."/>
            <person name="Rose M."/>
            <person name="Sadaie Y."/>
            <person name="Sato T."/>
            <person name="Scanlan E."/>
            <person name="Schleich S."/>
            <person name="Schroeter R."/>
            <person name="Scoffone F."/>
            <person name="Sekiguchi J."/>
            <person name="Sekowska A."/>
            <person name="Seror S.J."/>
            <person name="Serror P."/>
            <person name="Shin B.-S."/>
            <person name="Soldo B."/>
            <person name="Sorokin A."/>
            <person name="Tacconi E."/>
            <person name="Takagi T."/>
            <person name="Takahashi H."/>
            <person name="Takemaru K."/>
            <person name="Takeuchi M."/>
            <person name="Tamakoshi A."/>
            <person name="Tanaka T."/>
            <person name="Terpstra P."/>
            <person name="Tognoni A."/>
            <person name="Tosato V."/>
            <person name="Uchiyama S."/>
            <person name="Vandenbol M."/>
            <person name="Vannier F."/>
            <person name="Vassarotti A."/>
            <person name="Viari A."/>
            <person name="Wambutt R."/>
            <person name="Wedler E."/>
            <person name="Wedler H."/>
            <person name="Weitzenegger T."/>
            <person name="Winters P."/>
            <person name="Wipat A."/>
            <person name="Yamamoto H."/>
            <person name="Yamane K."/>
            <person name="Yasumoto K."/>
            <person name="Yata K."/>
            <person name="Yoshida K."/>
            <person name="Yoshikawa H.-F."/>
            <person name="Zumstein E."/>
            <person name="Yoshikawa H."/>
            <person name="Danchin A."/>
        </authorList>
    </citation>
    <scope>NUCLEOTIDE SEQUENCE [LARGE SCALE GENOMIC DNA]</scope>
    <source>
        <strain>168</strain>
    </source>
</reference>
<keyword id="KW-1185">Reference proteome</keyword>
<keyword id="KW-0732">Signal</keyword>
<sequence>MFNKMLVAIDGSDMSAKALDAAVHLAKEQQAELSILHVGREAVVTTSSLTGIVYVPEHFIDEIRNEVKKEGLKILENAKEKAAEKGVQAETIYANGEPAHEILNHAKEKGVSLIVVGSRGISGLKEMMLGSVSHKVSQLSTCPVLIVR</sequence>
<protein>
    <recommendedName>
        <fullName>Universal stress protein YxiE</fullName>
        <shortName>USP YxiE</shortName>
    </recommendedName>
</protein>
<gene>
    <name type="primary">yxiE</name>
    <name type="ordered locus">BSU39250</name>
    <name type="ORF">N17E</name>
</gene>
<feature type="signal peptide" evidence="1">
    <location>
        <begin position="1"/>
        <end position="18"/>
    </location>
</feature>
<feature type="chain" id="PRO_0000036363" description="Universal stress protein YxiE">
    <location>
        <begin position="19"/>
        <end position="148"/>
    </location>
</feature>